<proteinExistence type="inferred from homology"/>
<organism>
    <name type="scientific">Prochlorococcus marinus (strain NATL1A)</name>
    <dbReference type="NCBI Taxonomy" id="167555"/>
    <lineage>
        <taxon>Bacteria</taxon>
        <taxon>Bacillati</taxon>
        <taxon>Cyanobacteriota</taxon>
        <taxon>Cyanophyceae</taxon>
        <taxon>Synechococcales</taxon>
        <taxon>Prochlorococcaceae</taxon>
        <taxon>Prochlorococcus</taxon>
    </lineage>
</organism>
<sequence length="158" mass="17806">MKALYPGSFDPLTFGHLDLIQRGSDLFGEVLIAVLENPSKKATFSCKRRIEQIENATKDIPGCRTIAFKGLTVDCARENNADLILRGLRAMSDFEYELQVAHTNRSLNNQYETIFLATETHHSFLSSSVVKEVARFGGEIRHMVPEFIAKDLMKLNTN</sequence>
<name>COAD_PROM1</name>
<dbReference type="EC" id="2.7.7.3" evidence="1"/>
<dbReference type="EMBL" id="CP000553">
    <property type="protein sequence ID" value="ABM75557.1"/>
    <property type="molecule type" value="Genomic_DNA"/>
</dbReference>
<dbReference type="RefSeq" id="WP_011823683.1">
    <property type="nucleotide sequence ID" value="NC_008819.1"/>
</dbReference>
<dbReference type="SMR" id="A2C247"/>
<dbReference type="KEGG" id="pme:NATL1_09991"/>
<dbReference type="eggNOG" id="COG0669">
    <property type="taxonomic scope" value="Bacteria"/>
</dbReference>
<dbReference type="HOGENOM" id="CLU_100149_0_1_3"/>
<dbReference type="UniPathway" id="UPA00241">
    <property type="reaction ID" value="UER00355"/>
</dbReference>
<dbReference type="Proteomes" id="UP000002592">
    <property type="component" value="Chromosome"/>
</dbReference>
<dbReference type="GO" id="GO:0005737">
    <property type="term" value="C:cytoplasm"/>
    <property type="evidence" value="ECO:0007669"/>
    <property type="project" value="UniProtKB-SubCell"/>
</dbReference>
<dbReference type="GO" id="GO:0005524">
    <property type="term" value="F:ATP binding"/>
    <property type="evidence" value="ECO:0007669"/>
    <property type="project" value="UniProtKB-KW"/>
</dbReference>
<dbReference type="GO" id="GO:0004595">
    <property type="term" value="F:pantetheine-phosphate adenylyltransferase activity"/>
    <property type="evidence" value="ECO:0007669"/>
    <property type="project" value="UniProtKB-UniRule"/>
</dbReference>
<dbReference type="GO" id="GO:0015937">
    <property type="term" value="P:coenzyme A biosynthetic process"/>
    <property type="evidence" value="ECO:0007669"/>
    <property type="project" value="UniProtKB-UniRule"/>
</dbReference>
<dbReference type="CDD" id="cd02163">
    <property type="entry name" value="PPAT"/>
    <property type="match status" value="1"/>
</dbReference>
<dbReference type="Gene3D" id="3.40.50.620">
    <property type="entry name" value="HUPs"/>
    <property type="match status" value="1"/>
</dbReference>
<dbReference type="HAMAP" id="MF_00151">
    <property type="entry name" value="PPAT_bact"/>
    <property type="match status" value="1"/>
</dbReference>
<dbReference type="InterPro" id="IPR004821">
    <property type="entry name" value="Cyt_trans-like"/>
</dbReference>
<dbReference type="InterPro" id="IPR001980">
    <property type="entry name" value="PPAT"/>
</dbReference>
<dbReference type="InterPro" id="IPR014729">
    <property type="entry name" value="Rossmann-like_a/b/a_fold"/>
</dbReference>
<dbReference type="NCBIfam" id="TIGR01510">
    <property type="entry name" value="coaD_prev_kdtB"/>
    <property type="match status" value="1"/>
</dbReference>
<dbReference type="NCBIfam" id="TIGR00125">
    <property type="entry name" value="cyt_tran_rel"/>
    <property type="match status" value="1"/>
</dbReference>
<dbReference type="PANTHER" id="PTHR21342">
    <property type="entry name" value="PHOSPHOPANTETHEINE ADENYLYLTRANSFERASE"/>
    <property type="match status" value="1"/>
</dbReference>
<dbReference type="PANTHER" id="PTHR21342:SF1">
    <property type="entry name" value="PHOSPHOPANTETHEINE ADENYLYLTRANSFERASE"/>
    <property type="match status" value="1"/>
</dbReference>
<dbReference type="Pfam" id="PF01467">
    <property type="entry name" value="CTP_transf_like"/>
    <property type="match status" value="1"/>
</dbReference>
<dbReference type="PRINTS" id="PR01020">
    <property type="entry name" value="LPSBIOSNTHSS"/>
</dbReference>
<dbReference type="SUPFAM" id="SSF52374">
    <property type="entry name" value="Nucleotidylyl transferase"/>
    <property type="match status" value="1"/>
</dbReference>
<accession>A2C247</accession>
<comment type="function">
    <text evidence="1">Reversibly transfers an adenylyl group from ATP to 4'-phosphopantetheine, yielding dephospho-CoA (dPCoA) and pyrophosphate.</text>
</comment>
<comment type="catalytic activity">
    <reaction evidence="1">
        <text>(R)-4'-phosphopantetheine + ATP + H(+) = 3'-dephospho-CoA + diphosphate</text>
        <dbReference type="Rhea" id="RHEA:19801"/>
        <dbReference type="ChEBI" id="CHEBI:15378"/>
        <dbReference type="ChEBI" id="CHEBI:30616"/>
        <dbReference type="ChEBI" id="CHEBI:33019"/>
        <dbReference type="ChEBI" id="CHEBI:57328"/>
        <dbReference type="ChEBI" id="CHEBI:61723"/>
        <dbReference type="EC" id="2.7.7.3"/>
    </reaction>
</comment>
<comment type="cofactor">
    <cofactor evidence="1">
        <name>Mg(2+)</name>
        <dbReference type="ChEBI" id="CHEBI:18420"/>
    </cofactor>
</comment>
<comment type="pathway">
    <text evidence="1">Cofactor biosynthesis; coenzyme A biosynthesis; CoA from (R)-pantothenate: step 4/5.</text>
</comment>
<comment type="subunit">
    <text evidence="1">Homohexamer.</text>
</comment>
<comment type="subcellular location">
    <subcellularLocation>
        <location evidence="1">Cytoplasm</location>
    </subcellularLocation>
</comment>
<comment type="similarity">
    <text evidence="1">Belongs to the bacterial CoaD family.</text>
</comment>
<evidence type="ECO:0000255" key="1">
    <source>
        <dbReference type="HAMAP-Rule" id="MF_00151"/>
    </source>
</evidence>
<gene>
    <name evidence="1" type="primary">coaD</name>
    <name type="ordered locus">NATL1_09991</name>
</gene>
<protein>
    <recommendedName>
        <fullName evidence="1">Phosphopantetheine adenylyltransferase</fullName>
        <ecNumber evidence="1">2.7.7.3</ecNumber>
    </recommendedName>
    <alternativeName>
        <fullName evidence="1">Dephospho-CoA pyrophosphorylase</fullName>
    </alternativeName>
    <alternativeName>
        <fullName evidence="1">Pantetheine-phosphate adenylyltransferase</fullName>
        <shortName evidence="1">PPAT</shortName>
    </alternativeName>
</protein>
<feature type="chain" id="PRO_1000011198" description="Phosphopantetheine adenylyltransferase">
    <location>
        <begin position="1"/>
        <end position="158"/>
    </location>
</feature>
<feature type="binding site" evidence="1">
    <location>
        <begin position="8"/>
        <end position="9"/>
    </location>
    <ligand>
        <name>ATP</name>
        <dbReference type="ChEBI" id="CHEBI:30616"/>
    </ligand>
</feature>
<feature type="binding site" evidence="1">
    <location>
        <position position="8"/>
    </location>
    <ligand>
        <name>substrate</name>
    </ligand>
</feature>
<feature type="binding site" evidence="1">
    <location>
        <position position="16"/>
    </location>
    <ligand>
        <name>ATP</name>
        <dbReference type="ChEBI" id="CHEBI:30616"/>
    </ligand>
</feature>
<feature type="binding site" evidence="1">
    <location>
        <position position="40"/>
    </location>
    <ligand>
        <name>substrate</name>
    </ligand>
</feature>
<feature type="binding site" evidence="1">
    <location>
        <position position="72"/>
    </location>
    <ligand>
        <name>substrate</name>
    </ligand>
</feature>
<feature type="binding site" evidence="1">
    <location>
        <position position="86"/>
    </location>
    <ligand>
        <name>substrate</name>
    </ligand>
</feature>
<feature type="binding site" evidence="1">
    <location>
        <begin position="87"/>
        <end position="89"/>
    </location>
    <ligand>
        <name>ATP</name>
        <dbReference type="ChEBI" id="CHEBI:30616"/>
    </ligand>
</feature>
<feature type="binding site" evidence="1">
    <location>
        <position position="97"/>
    </location>
    <ligand>
        <name>ATP</name>
        <dbReference type="ChEBI" id="CHEBI:30616"/>
    </ligand>
</feature>
<feature type="binding site" evidence="1">
    <location>
        <begin position="122"/>
        <end position="128"/>
    </location>
    <ligand>
        <name>ATP</name>
        <dbReference type="ChEBI" id="CHEBI:30616"/>
    </ligand>
</feature>
<feature type="site" description="Transition state stabilizer" evidence="1">
    <location>
        <position position="16"/>
    </location>
</feature>
<reference key="1">
    <citation type="journal article" date="2007" name="PLoS Genet.">
        <title>Patterns and implications of gene gain and loss in the evolution of Prochlorococcus.</title>
        <authorList>
            <person name="Kettler G.C."/>
            <person name="Martiny A.C."/>
            <person name="Huang K."/>
            <person name="Zucker J."/>
            <person name="Coleman M.L."/>
            <person name="Rodrigue S."/>
            <person name="Chen F."/>
            <person name="Lapidus A."/>
            <person name="Ferriera S."/>
            <person name="Johnson J."/>
            <person name="Steglich C."/>
            <person name="Church G.M."/>
            <person name="Richardson P."/>
            <person name="Chisholm S.W."/>
        </authorList>
    </citation>
    <scope>NUCLEOTIDE SEQUENCE [LARGE SCALE GENOMIC DNA]</scope>
    <source>
        <strain>NATL1A</strain>
    </source>
</reference>
<keyword id="KW-0067">ATP-binding</keyword>
<keyword id="KW-0173">Coenzyme A biosynthesis</keyword>
<keyword id="KW-0963">Cytoplasm</keyword>
<keyword id="KW-0460">Magnesium</keyword>
<keyword id="KW-0547">Nucleotide-binding</keyword>
<keyword id="KW-0548">Nucleotidyltransferase</keyword>
<keyword id="KW-0808">Transferase</keyword>